<keyword id="KW-0002">3D-structure</keyword>
<keyword id="KW-0106">Calcium</keyword>
<keyword id="KW-0119">Carbohydrate metabolism</keyword>
<keyword id="KW-1015">Disulfide bond</keyword>
<keyword id="KW-0325">Glycoprotein</keyword>
<keyword id="KW-0378">Hydrolase</keyword>
<keyword id="KW-0479">Metal-binding</keyword>
<keyword id="KW-0624">Polysaccharide degradation</keyword>
<keyword id="KW-1185">Reference proteome</keyword>
<keyword id="KW-0964">Secreted</keyword>
<keyword id="KW-0719">Serine esterase</keyword>
<keyword id="KW-0732">Signal</keyword>
<keyword id="KW-0858">Xylan degradation</keyword>
<protein>
    <recommendedName>
        <fullName>Probable feruloyl esterase B-1</fullName>
        <ecNumber evidence="2">3.1.1.73</ecNumber>
    </recommendedName>
    <alternativeName>
        <fullName>Ferulic acid esterase B-1</fullName>
        <shortName>FAEB-1</shortName>
    </alternativeName>
</protein>
<reference key="1">
    <citation type="journal article" date="2005" name="Nature">
        <title>Genome sequencing and analysis of Aspergillus oryzae.</title>
        <authorList>
            <person name="Machida M."/>
            <person name="Asai K."/>
            <person name="Sano M."/>
            <person name="Tanaka T."/>
            <person name="Kumagai T."/>
            <person name="Terai G."/>
            <person name="Kusumoto K."/>
            <person name="Arima T."/>
            <person name="Akita O."/>
            <person name="Kashiwagi Y."/>
            <person name="Abe K."/>
            <person name="Gomi K."/>
            <person name="Horiuchi H."/>
            <person name="Kitamoto K."/>
            <person name="Kobayashi T."/>
            <person name="Takeuchi M."/>
            <person name="Denning D.W."/>
            <person name="Galagan J.E."/>
            <person name="Nierman W.C."/>
            <person name="Yu J."/>
            <person name="Archer D.B."/>
            <person name="Bennett J.W."/>
            <person name="Bhatnagar D."/>
            <person name="Cleveland T.E."/>
            <person name="Fedorova N.D."/>
            <person name="Gotoh O."/>
            <person name="Horikawa H."/>
            <person name="Hosoyama A."/>
            <person name="Ichinomiya M."/>
            <person name="Igarashi R."/>
            <person name="Iwashita K."/>
            <person name="Juvvadi P.R."/>
            <person name="Kato M."/>
            <person name="Kato Y."/>
            <person name="Kin T."/>
            <person name="Kokubun A."/>
            <person name="Maeda H."/>
            <person name="Maeyama N."/>
            <person name="Maruyama J."/>
            <person name="Nagasaki H."/>
            <person name="Nakajima T."/>
            <person name="Oda K."/>
            <person name="Okada K."/>
            <person name="Paulsen I."/>
            <person name="Sakamoto K."/>
            <person name="Sawano T."/>
            <person name="Takahashi M."/>
            <person name="Takase K."/>
            <person name="Terabayashi Y."/>
            <person name="Wortman J.R."/>
            <person name="Yamada O."/>
            <person name="Yamagata Y."/>
            <person name="Anazawa H."/>
            <person name="Hata Y."/>
            <person name="Koide Y."/>
            <person name="Komori T."/>
            <person name="Koyama Y."/>
            <person name="Minetoki T."/>
            <person name="Suharnan S."/>
            <person name="Tanaka A."/>
            <person name="Isono K."/>
            <person name="Kuhara S."/>
            <person name="Ogasawara N."/>
            <person name="Kikuchi H."/>
        </authorList>
    </citation>
    <scope>NUCLEOTIDE SEQUENCE [LARGE SCALE GENOMIC DNA]</scope>
    <source>
        <strain>ATCC 42149 / RIB 40</strain>
    </source>
</reference>
<reference key="2">
    <citation type="journal article" date="2014" name="Proteins">
        <title>Crystal structure of a feruloyl esterase belonging to the tannase family: a disulfide bond near a catalytic triad.</title>
        <authorList>
            <person name="Suzuki K."/>
            <person name="Hori A."/>
            <person name="Kawamoto K."/>
            <person name="Thangudu R.R."/>
            <person name="Ishida T."/>
            <person name="Igarashi K."/>
            <person name="Samejima M."/>
            <person name="Yamada C."/>
            <person name="Arakawa T."/>
            <person name="Wakagi T."/>
            <person name="Koseki T."/>
            <person name="Fushinobu S."/>
        </authorList>
    </citation>
    <scope>X-RAY CRYSTALLOGRAPHY (1.50 ANGSTROMS) OF 19-540 IN COMPLEX WITH CALCIUM</scope>
    <scope>DISULFIDE BOND</scope>
    <scope>GLYCOSYLATION AT ASN-49; ASN-95; ASN-234; ASN-298 AND ASN-367</scope>
    <scope>ACTIVE SITES</scope>
    <scope>SUBUNIT</scope>
    <scope>MUTAGENESIS OF CYS-202 AND CYS-458</scope>
</reference>
<accession>Q2UP89</accession>
<dbReference type="EC" id="3.1.1.73" evidence="2"/>
<dbReference type="EMBL" id="BA000050">
    <property type="protein sequence ID" value="BAE56626.1"/>
    <property type="molecule type" value="Genomic_DNA"/>
</dbReference>
<dbReference type="PDB" id="3WMT">
    <property type="method" value="X-ray"/>
    <property type="resolution" value="1.50 A"/>
    <property type="chains" value="A/B=19-540"/>
</dbReference>
<dbReference type="PDBsum" id="3WMT"/>
<dbReference type="SMR" id="Q2UP89"/>
<dbReference type="STRING" id="510516.Q2UP89"/>
<dbReference type="ESTHER" id="aspor-q2up89">
    <property type="family name" value="Tannase"/>
</dbReference>
<dbReference type="GlyCosmos" id="Q2UP89">
    <property type="glycosylation" value="11 sites, No reported glycans"/>
</dbReference>
<dbReference type="iPTMnet" id="Q2UP89"/>
<dbReference type="EnsemblFungi" id="BAE56626">
    <property type="protein sequence ID" value="BAE56626"/>
    <property type="gene ID" value="AO090001000066"/>
</dbReference>
<dbReference type="VEuPathDB" id="FungiDB:AO090001000066"/>
<dbReference type="HOGENOM" id="CLU_014819_1_0_1"/>
<dbReference type="OMA" id="FMEAWLP"/>
<dbReference type="BRENDA" id="3.1.1.73">
    <property type="organism ID" value="522"/>
</dbReference>
<dbReference type="EvolutionaryTrace" id="Q2UP89"/>
<dbReference type="Proteomes" id="UP000006564">
    <property type="component" value="Chromosome 2"/>
</dbReference>
<dbReference type="GO" id="GO:0005576">
    <property type="term" value="C:extracellular region"/>
    <property type="evidence" value="ECO:0007669"/>
    <property type="project" value="UniProtKB-SubCell"/>
</dbReference>
<dbReference type="GO" id="GO:0030600">
    <property type="term" value="F:feruloyl esterase activity"/>
    <property type="evidence" value="ECO:0000314"/>
    <property type="project" value="AspGD"/>
</dbReference>
<dbReference type="GO" id="GO:0046872">
    <property type="term" value="F:metal ion binding"/>
    <property type="evidence" value="ECO:0007669"/>
    <property type="project" value="UniProtKB-KW"/>
</dbReference>
<dbReference type="GO" id="GO:0045493">
    <property type="term" value="P:xylan catabolic process"/>
    <property type="evidence" value="ECO:0007669"/>
    <property type="project" value="UniProtKB-KW"/>
</dbReference>
<dbReference type="Gene3D" id="3.40.50.1820">
    <property type="entry name" value="alpha/beta hydrolase"/>
    <property type="match status" value="1"/>
</dbReference>
<dbReference type="InterPro" id="IPR029058">
    <property type="entry name" value="AB_hydrolase_fold"/>
</dbReference>
<dbReference type="InterPro" id="IPR011118">
    <property type="entry name" value="Tannase/feruloyl_esterase"/>
</dbReference>
<dbReference type="PANTHER" id="PTHR33938">
    <property type="entry name" value="FERULOYL ESTERASE B-RELATED"/>
    <property type="match status" value="1"/>
</dbReference>
<dbReference type="PANTHER" id="PTHR33938:SF15">
    <property type="entry name" value="FERULOYL ESTERASE B-RELATED"/>
    <property type="match status" value="1"/>
</dbReference>
<dbReference type="Pfam" id="PF07519">
    <property type="entry name" value="Tannase"/>
    <property type="match status" value="1"/>
</dbReference>
<dbReference type="SUPFAM" id="SSF53474">
    <property type="entry name" value="alpha/beta-Hydrolases"/>
    <property type="match status" value="1"/>
</dbReference>
<organism>
    <name type="scientific">Aspergillus oryzae (strain ATCC 42149 / RIB 40)</name>
    <name type="common">Yellow koji mold</name>
    <dbReference type="NCBI Taxonomy" id="510516"/>
    <lineage>
        <taxon>Eukaryota</taxon>
        <taxon>Fungi</taxon>
        <taxon>Dikarya</taxon>
        <taxon>Ascomycota</taxon>
        <taxon>Pezizomycotina</taxon>
        <taxon>Eurotiomycetes</taxon>
        <taxon>Eurotiomycetidae</taxon>
        <taxon>Eurotiales</taxon>
        <taxon>Aspergillaceae</taxon>
        <taxon>Aspergillus</taxon>
        <taxon>Aspergillus subgen. Circumdati</taxon>
    </lineage>
</organism>
<comment type="function">
    <text evidence="2">Involved in degradation of plant cell walls. Hydrolyzes the feruloyl-arabinose ester bond in arabinoxylans as well as the feruloyl-galactose and feruloyl-arabinose ester bonds in pectin.</text>
</comment>
<comment type="catalytic activity">
    <reaction evidence="2">
        <text>feruloyl-polysaccharide + H2O = ferulate + polysaccharide.</text>
        <dbReference type="EC" id="3.1.1.73"/>
    </reaction>
</comment>
<comment type="subunit">
    <text evidence="4">Homodimer.</text>
</comment>
<comment type="subcellular location">
    <subcellularLocation>
        <location evidence="1">Secreted</location>
    </subcellularLocation>
</comment>
<comment type="miscellaneous">
    <text evidence="6">The calcium ion seen in the crystal structure is located far from the active site and appears to have a role in stabilization of the lid domain.</text>
</comment>
<comment type="similarity">
    <text evidence="5">Belongs to the tannase family.</text>
</comment>
<name>FAEB1_ASPOR</name>
<gene>
    <name type="primary">faeB-1</name>
    <name type="ORF">AO090001000066</name>
</gene>
<feature type="signal peptide" evidence="3">
    <location>
        <begin position="1"/>
        <end position="18"/>
    </location>
</feature>
<feature type="chain" id="PRO_0000394924" description="Probable feruloyl esterase B-1">
    <location>
        <begin position="19"/>
        <end position="540"/>
    </location>
</feature>
<feature type="active site" description="Acyl-ester intermediate" evidence="6">
    <location>
        <position position="203"/>
    </location>
</feature>
<feature type="active site" description="Charge relay system" evidence="6">
    <location>
        <position position="417"/>
    </location>
</feature>
<feature type="active site" description="Charge relay system" evidence="6">
    <location>
        <position position="457"/>
    </location>
</feature>
<feature type="binding site" evidence="4 7">
    <location>
        <position position="272"/>
    </location>
    <ligand>
        <name>Ca(2+)</name>
        <dbReference type="ChEBI" id="CHEBI:29108"/>
    </ligand>
</feature>
<feature type="binding site" evidence="4 7">
    <location>
        <position position="275"/>
    </location>
    <ligand>
        <name>Ca(2+)</name>
        <dbReference type="ChEBI" id="CHEBI:29108"/>
    </ligand>
</feature>
<feature type="binding site" evidence="4 7">
    <location>
        <position position="277"/>
    </location>
    <ligand>
        <name>Ca(2+)</name>
        <dbReference type="ChEBI" id="CHEBI:29108"/>
    </ligand>
</feature>
<feature type="binding site" evidence="4 7">
    <location>
        <position position="279"/>
    </location>
    <ligand>
        <name>Ca(2+)</name>
        <dbReference type="ChEBI" id="CHEBI:29108"/>
    </ligand>
</feature>
<feature type="binding site" evidence="4 7">
    <location>
        <position position="281"/>
    </location>
    <ligand>
        <name>Ca(2+)</name>
        <dbReference type="ChEBI" id="CHEBI:29108"/>
    </ligand>
</feature>
<feature type="glycosylation site" description="N-linked (GlcNAc...) asparagine" evidence="3">
    <location>
        <position position="28"/>
    </location>
</feature>
<feature type="glycosylation site" description="N-linked (GlcNAc...) asparagine" evidence="4 7">
    <location>
        <position position="49"/>
    </location>
</feature>
<feature type="glycosylation site" description="N-linked (GlcNAc...) asparagine" evidence="3">
    <location>
        <position position="66"/>
    </location>
</feature>
<feature type="glycosylation site" description="N-linked (GlcNAc...) asparagine" evidence="4 7">
    <location>
        <position position="95"/>
    </location>
</feature>
<feature type="glycosylation site" description="N-linked (GlcNAc...) asparagine" evidence="3">
    <location>
        <position position="113"/>
    </location>
</feature>
<feature type="glycosylation site" description="N-linked (GlcNAc...) asparagine" evidence="3">
    <location>
        <position position="195"/>
    </location>
</feature>
<feature type="glycosylation site" description="N-linked (GlcNAc...) asparagine" evidence="4 7">
    <location>
        <position position="234"/>
    </location>
</feature>
<feature type="glycosylation site" description="N-linked (GlcNAc...) asparagine" evidence="4 7">
    <location>
        <position position="298"/>
    </location>
</feature>
<feature type="glycosylation site" description="N-linked (GlcNAc...) asparagine" evidence="3">
    <location>
        <position position="328"/>
    </location>
</feature>
<feature type="glycosylation site" description="N-linked (GlcNAc...) asparagine" evidence="4 7">
    <location>
        <position position="367"/>
    </location>
</feature>
<feature type="glycosylation site" description="N-linked (GlcNAc...) asparagine" evidence="3">
    <location>
        <position position="506"/>
    </location>
</feature>
<feature type="disulfide bond" evidence="4">
    <location>
        <begin position="41"/>
        <end position="90"/>
    </location>
</feature>
<feature type="disulfide bond" evidence="4">
    <location>
        <begin position="76"/>
        <end position="129"/>
    </location>
</feature>
<feature type="disulfide bond" evidence="4">
    <location>
        <begin position="202"/>
        <end position="458"/>
    </location>
</feature>
<feature type="disulfide bond" evidence="4">
    <location>
        <begin position="271"/>
        <end position="288"/>
    </location>
</feature>
<feature type="disulfide bond" evidence="4">
    <location>
        <begin position="297"/>
        <end position="308"/>
    </location>
</feature>
<feature type="disulfide bond" evidence="4">
    <location>
        <begin position="517"/>
        <end position="539"/>
    </location>
</feature>
<feature type="mutagenesis site" description="High decrease in catalytic activity." evidence="4">
    <original>C</original>
    <variation>A</variation>
    <location>
        <position position="202"/>
    </location>
</feature>
<feature type="mutagenesis site" description="High decrease in catalytic activity." evidence="4">
    <original>C</original>
    <variation>A</variation>
    <location>
        <position position="458"/>
    </location>
</feature>
<feature type="helix" evidence="8">
    <location>
        <begin position="37"/>
        <end position="44"/>
    </location>
</feature>
<feature type="helix" evidence="8">
    <location>
        <begin position="45"/>
        <end position="47"/>
    </location>
</feature>
<feature type="strand" evidence="8">
    <location>
        <begin position="53"/>
        <end position="61"/>
    </location>
</feature>
<feature type="helix" evidence="8">
    <location>
        <begin position="74"/>
        <end position="76"/>
    </location>
</feature>
<feature type="strand" evidence="8">
    <location>
        <begin position="89"/>
        <end position="99"/>
    </location>
</feature>
<feature type="strand" evidence="8">
    <location>
        <begin position="102"/>
        <end position="113"/>
    </location>
</feature>
<feature type="strand" evidence="8">
    <location>
        <begin position="118"/>
        <end position="120"/>
    </location>
</feature>
<feature type="helix" evidence="8">
    <location>
        <begin position="132"/>
        <end position="139"/>
    </location>
</feature>
<feature type="turn" evidence="8">
    <location>
        <begin position="140"/>
        <end position="142"/>
    </location>
</feature>
<feature type="strand" evidence="8">
    <location>
        <begin position="144"/>
        <end position="148"/>
    </location>
</feature>
<feature type="strand" evidence="8">
    <location>
        <begin position="152"/>
        <end position="157"/>
    </location>
</feature>
<feature type="helix" evidence="8">
    <location>
        <begin position="158"/>
        <end position="160"/>
    </location>
</feature>
<feature type="helix" evidence="8">
    <location>
        <begin position="164"/>
        <end position="171"/>
    </location>
</feature>
<feature type="helix" evidence="8">
    <location>
        <begin position="173"/>
        <end position="189"/>
    </location>
</feature>
<feature type="strand" evidence="8">
    <location>
        <begin position="197"/>
        <end position="202"/>
    </location>
</feature>
<feature type="helix" evidence="8">
    <location>
        <begin position="204"/>
        <end position="215"/>
    </location>
</feature>
<feature type="strand" evidence="8">
    <location>
        <begin position="221"/>
        <end position="227"/>
    </location>
</feature>
<feature type="helix" evidence="8">
    <location>
        <begin position="232"/>
        <end position="246"/>
    </location>
</feature>
<feature type="helix" evidence="8">
    <location>
        <begin position="257"/>
        <end position="271"/>
    </location>
</feature>
<feature type="helix" evidence="8">
    <location>
        <begin position="272"/>
        <end position="275"/>
    </location>
</feature>
<feature type="helix" evidence="8">
    <location>
        <begin position="285"/>
        <end position="287"/>
    </location>
</feature>
<feature type="helix" evidence="8">
    <location>
        <begin position="292"/>
        <end position="295"/>
    </location>
</feature>
<feature type="helix" evidence="8">
    <location>
        <begin position="303"/>
        <end position="305"/>
    </location>
</feature>
<feature type="strand" evidence="8">
    <location>
        <begin position="306"/>
        <end position="309"/>
    </location>
</feature>
<feature type="helix" evidence="8">
    <location>
        <begin position="311"/>
        <end position="320"/>
    </location>
</feature>
<feature type="helix" evidence="8">
    <location>
        <begin position="327"/>
        <end position="329"/>
    </location>
</feature>
<feature type="strand" evidence="8">
    <location>
        <begin position="331"/>
        <end position="333"/>
    </location>
</feature>
<feature type="helix" evidence="8">
    <location>
        <begin position="341"/>
        <end position="347"/>
    </location>
</feature>
<feature type="strand" evidence="8">
    <location>
        <begin position="350"/>
        <end position="352"/>
    </location>
</feature>
<feature type="helix" evidence="8">
    <location>
        <begin position="355"/>
        <end position="363"/>
    </location>
</feature>
<feature type="helix" evidence="8">
    <location>
        <begin position="373"/>
        <end position="375"/>
    </location>
</feature>
<feature type="helix" evidence="8">
    <location>
        <begin position="378"/>
        <end position="387"/>
    </location>
</feature>
<feature type="helix" evidence="8">
    <location>
        <begin position="389"/>
        <end position="391"/>
    </location>
</feature>
<feature type="helix" evidence="8">
    <location>
        <begin position="400"/>
        <end position="404"/>
    </location>
</feature>
<feature type="strand" evidence="8">
    <location>
        <begin position="408"/>
        <end position="414"/>
    </location>
</feature>
<feature type="strand" evidence="8">
    <location>
        <begin position="418"/>
        <end position="420"/>
    </location>
</feature>
<feature type="helix" evidence="8">
    <location>
        <begin position="422"/>
        <end position="436"/>
    </location>
</feature>
<feature type="helix" evidence="8">
    <location>
        <begin position="440"/>
        <end position="443"/>
    </location>
</feature>
<feature type="turn" evidence="8">
    <location>
        <begin position="444"/>
        <end position="446"/>
    </location>
</feature>
<feature type="strand" evidence="8">
    <location>
        <begin position="447"/>
        <end position="452"/>
    </location>
</feature>
<feature type="strand" evidence="8">
    <location>
        <begin position="457"/>
        <end position="460"/>
    </location>
</feature>
<feature type="strand" evidence="8">
    <location>
        <begin position="462"/>
        <end position="464"/>
    </location>
</feature>
<feature type="strand" evidence="8">
    <location>
        <begin position="468"/>
        <end position="470"/>
    </location>
</feature>
<feature type="helix" evidence="8">
    <location>
        <begin position="471"/>
        <end position="473"/>
    </location>
</feature>
<feature type="helix" evidence="8">
    <location>
        <begin position="479"/>
        <end position="481"/>
    </location>
</feature>
<feature type="helix" evidence="8">
    <location>
        <begin position="483"/>
        <end position="493"/>
    </location>
</feature>
<feature type="strand" evidence="8">
    <location>
        <begin position="498"/>
        <end position="506"/>
    </location>
</feature>
<feature type="strand" evidence="8">
    <location>
        <begin position="509"/>
        <end position="517"/>
    </location>
</feature>
<feature type="strand" evidence="8">
    <location>
        <begin position="522"/>
        <end position="525"/>
    </location>
</feature>
<feature type="helix" evidence="8">
    <location>
        <begin position="534"/>
        <end position="536"/>
    </location>
</feature>
<feature type="strand" evidence="8">
    <location>
        <begin position="537"/>
        <end position="540"/>
    </location>
</feature>
<proteinExistence type="evidence at protein level"/>
<sequence length="540" mass="58419">MLVMQLLLPFLASTAAAAAAIDSTSSSNGSDHHGSSFQAECESFKAKINVTNANVHSVTYVPAGVNISMADNPSICGGDEDPITSTFAFCRIALNVTTSSKSQIFMEAWLPSNYSGRFLSTGNGGLGGCVKYDDMAYAAGYGFATVGTNNGHFGNNGVSFYQNTEVVEDFAYRALHTGVVVGKELTKNFYPQGYNKSYYLGCSTGGRQGWKSVQTFPDDFDGVVAGAPAFNFINLTSWGARFLTLTGDSSAETFVTETQWTAVHNEIIRQCDSLDGAKDGIIEDPDLCQPIIEALLCNATQSSTSGTCLTGAQVKTVNGVFSATYGLNGSFLYPRMQPGSELAAYSSYYSGTPFAYAEDWYRYVVFNNTNWDVATWTVQDAAIANAQDPYQISTWNGDLSPFQKKGGKVLHYHGMEDAIISSESSKVYYKHVADTMNLSPSELDSFYRFFPISGMAHCANADGPSAIGQGTGTFAGNNPQDNVLLAMVQWVEEGVAPDFVRGAKLNGSTVEYRRKHCKYPKRNRYVGPGSYTDENAWECV</sequence>
<evidence type="ECO:0000250" key="1"/>
<evidence type="ECO:0000250" key="2">
    <source>
        <dbReference type="UniProtKB" id="Q8WZI8"/>
    </source>
</evidence>
<evidence type="ECO:0000255" key="3"/>
<evidence type="ECO:0000269" key="4">
    <source>
    </source>
</evidence>
<evidence type="ECO:0000305" key="5"/>
<evidence type="ECO:0000305" key="6">
    <source>
    </source>
</evidence>
<evidence type="ECO:0007744" key="7">
    <source>
        <dbReference type="PDB" id="3WMT"/>
    </source>
</evidence>
<evidence type="ECO:0007829" key="8">
    <source>
        <dbReference type="PDB" id="3WMT"/>
    </source>
</evidence>